<keyword id="KW-0325">Glycoprotein</keyword>
<keyword id="KW-0472">Membrane</keyword>
<keyword id="KW-1185">Reference proteome</keyword>
<keyword id="KW-0735">Signal-anchor</keyword>
<keyword id="KW-0808">Transferase</keyword>
<keyword id="KW-0812">Transmembrane</keyword>
<keyword id="KW-1133">Transmembrane helix</keyword>
<sequence length="470" mass="55037">MDERFNKWLLTPVLTLLFVVIMYQYVSPSCTSSCTNFGEQLRSGEARPPAVPSPARRAQAPLDEWERRPQLPPPPRGPPEGSRGVAAPEDEDEDPGDPEEEEEEEEEEPDPEAPENGSLPRFVPRFNFTLKDLTRFVDFNIKGRDVIVFLHIQKTGGTTFGRHLVKNIRLEQPCSCKAGQKKCTCHRPGKKETWLFSRFSTGWSCGLHADWTELTNCVPAIMEKKDCPRNHSHTRNFYYITMLRDPVSRYLSEWKHVQRGATWKTSLHMCDGRSPTPDELPTCYPGDDWSGVSLREFMDCSYNLANNRQVRMLADLSLVGCYNLTFMNESERNTILLQSAKNNLKNMAFFGLTEFQRKTQFLFERTFNLKFISPFTQFNITRASNVDINDGARQHIEELNFLDMQLYEYAKDLFQQRYHHTKQLEHQRDRQKRREERRLQREHRAHRWPKEDRAMEGTVTEDYNSQVVRW</sequence>
<accession>Q9QYK4</accession>
<accession>Q148Q1</accession>
<name>H6ST3_MOUSE</name>
<evidence type="ECO:0000250" key="1">
    <source>
        <dbReference type="UniProtKB" id="A0MGZ7"/>
    </source>
</evidence>
<evidence type="ECO:0000255" key="2"/>
<evidence type="ECO:0000256" key="3">
    <source>
        <dbReference type="SAM" id="MobiDB-lite"/>
    </source>
</evidence>
<evidence type="ECO:0000269" key="4">
    <source>
    </source>
</evidence>
<evidence type="ECO:0000305" key="5"/>
<dbReference type="EC" id="2.8.2.-"/>
<dbReference type="EMBL" id="AB024567">
    <property type="protein sequence ID" value="BAA89249.1"/>
    <property type="molecule type" value="mRNA"/>
</dbReference>
<dbReference type="EMBL" id="BC118035">
    <property type="protein sequence ID" value="AAI18036.1"/>
    <property type="molecule type" value="mRNA"/>
</dbReference>
<dbReference type="CCDS" id="CCDS27339.1"/>
<dbReference type="RefSeq" id="NP_056635.2">
    <property type="nucleotide sequence ID" value="NM_015820.3"/>
</dbReference>
<dbReference type="SMR" id="Q9QYK4"/>
<dbReference type="FunCoup" id="Q9QYK4">
    <property type="interactions" value="433"/>
</dbReference>
<dbReference type="STRING" id="10090.ENSMUSP00000070394"/>
<dbReference type="GlyCosmos" id="Q9QYK4">
    <property type="glycosylation" value="6 sites, No reported glycans"/>
</dbReference>
<dbReference type="GlyGen" id="Q9QYK4">
    <property type="glycosylation" value="7 sites, 3 N-linked glycans (3 sites)"/>
</dbReference>
<dbReference type="iPTMnet" id="Q9QYK4"/>
<dbReference type="PhosphoSitePlus" id="Q9QYK4"/>
<dbReference type="PaxDb" id="10090-ENSMUSP00000070394"/>
<dbReference type="ProteomicsDB" id="270919"/>
<dbReference type="Antibodypedia" id="24893">
    <property type="antibodies" value="45 antibodies from 18 providers"/>
</dbReference>
<dbReference type="DNASU" id="50787"/>
<dbReference type="Ensembl" id="ENSMUST00000065904.5">
    <property type="protein sequence ID" value="ENSMUSP00000070394.4"/>
    <property type="gene ID" value="ENSMUSG00000053465.7"/>
</dbReference>
<dbReference type="GeneID" id="50787"/>
<dbReference type="KEGG" id="mmu:50787"/>
<dbReference type="UCSC" id="uc007uzn.2">
    <property type="organism name" value="mouse"/>
</dbReference>
<dbReference type="AGR" id="MGI:1354960"/>
<dbReference type="CTD" id="266722"/>
<dbReference type="MGI" id="MGI:1354960">
    <property type="gene designation" value="Hs6st3"/>
</dbReference>
<dbReference type="VEuPathDB" id="HostDB:ENSMUSG00000053465"/>
<dbReference type="eggNOG" id="KOG3955">
    <property type="taxonomic scope" value="Eukaryota"/>
</dbReference>
<dbReference type="GeneTree" id="ENSGT00950000183071"/>
<dbReference type="HOGENOM" id="CLU_027877_1_0_1"/>
<dbReference type="InParanoid" id="Q9QYK4"/>
<dbReference type="OMA" id="RKTQYMF"/>
<dbReference type="OrthoDB" id="406981at2759"/>
<dbReference type="PhylomeDB" id="Q9QYK4"/>
<dbReference type="TreeFam" id="TF312835"/>
<dbReference type="Reactome" id="R-MMU-2022928">
    <property type="pathway name" value="HS-GAG biosynthesis"/>
</dbReference>
<dbReference type="SABIO-RK" id="Q9QYK4"/>
<dbReference type="BioGRID-ORCS" id="50787">
    <property type="hits" value="2 hits in 78 CRISPR screens"/>
</dbReference>
<dbReference type="ChiTaRS" id="Hs6st3">
    <property type="organism name" value="mouse"/>
</dbReference>
<dbReference type="PRO" id="PR:Q9QYK4"/>
<dbReference type="Proteomes" id="UP000000589">
    <property type="component" value="Chromosome 14"/>
</dbReference>
<dbReference type="RNAct" id="Q9QYK4">
    <property type="molecule type" value="protein"/>
</dbReference>
<dbReference type="Bgee" id="ENSMUSG00000053465">
    <property type="expression patterns" value="Expressed in cortical layer I and 46 other cell types or tissues"/>
</dbReference>
<dbReference type="GO" id="GO:0005794">
    <property type="term" value="C:Golgi apparatus"/>
    <property type="evidence" value="ECO:0000314"/>
    <property type="project" value="MGI"/>
</dbReference>
<dbReference type="GO" id="GO:0016020">
    <property type="term" value="C:membrane"/>
    <property type="evidence" value="ECO:0007669"/>
    <property type="project" value="UniProtKB-SubCell"/>
</dbReference>
<dbReference type="GO" id="GO:0017095">
    <property type="term" value="F:heparan sulfate 6-sulfotransferase activity"/>
    <property type="evidence" value="ECO:0000314"/>
    <property type="project" value="MGI"/>
</dbReference>
<dbReference type="GO" id="GO:0015012">
    <property type="term" value="P:heparan sulfate proteoglycan biosynthetic process"/>
    <property type="evidence" value="ECO:0000314"/>
    <property type="project" value="MGI"/>
</dbReference>
<dbReference type="FunFam" id="3.40.50.300:FF:000852">
    <property type="entry name" value="Heparan-sulfate 6-O-sulfotransferase"/>
    <property type="match status" value="1"/>
</dbReference>
<dbReference type="FunFam" id="3.40.50.300:FF:001933">
    <property type="entry name" value="Heparan-sulfate 6-O-sulfotransferase"/>
    <property type="match status" value="1"/>
</dbReference>
<dbReference type="Gene3D" id="3.40.50.300">
    <property type="entry name" value="P-loop containing nucleotide triphosphate hydrolases"/>
    <property type="match status" value="1"/>
</dbReference>
<dbReference type="InterPro" id="IPR010635">
    <property type="entry name" value="Heparan_SO4-6-sulfoTrfase"/>
</dbReference>
<dbReference type="InterPro" id="IPR027417">
    <property type="entry name" value="P-loop_NTPase"/>
</dbReference>
<dbReference type="InterPro" id="IPR005331">
    <property type="entry name" value="Sulfotransferase"/>
</dbReference>
<dbReference type="PANTHER" id="PTHR12812">
    <property type="entry name" value="HEPARAN SULFATE 6-O-SULFOTRANSFERASE 3"/>
    <property type="match status" value="1"/>
</dbReference>
<dbReference type="PANTHER" id="PTHR12812:SF3">
    <property type="entry name" value="HEPARAN-SULFATE 6-O-SULFOTRANSFERASE 3"/>
    <property type="match status" value="1"/>
</dbReference>
<dbReference type="Pfam" id="PF03567">
    <property type="entry name" value="Sulfotransfer_2"/>
    <property type="match status" value="1"/>
</dbReference>
<dbReference type="SUPFAM" id="SSF52540">
    <property type="entry name" value="P-loop containing nucleoside triphosphate hydrolases"/>
    <property type="match status" value="1"/>
</dbReference>
<proteinExistence type="evidence at protein level"/>
<gene>
    <name type="primary">Hs6st3</name>
</gene>
<organism>
    <name type="scientific">Mus musculus</name>
    <name type="common">Mouse</name>
    <dbReference type="NCBI Taxonomy" id="10090"/>
    <lineage>
        <taxon>Eukaryota</taxon>
        <taxon>Metazoa</taxon>
        <taxon>Chordata</taxon>
        <taxon>Craniata</taxon>
        <taxon>Vertebrata</taxon>
        <taxon>Euteleostomi</taxon>
        <taxon>Mammalia</taxon>
        <taxon>Eutheria</taxon>
        <taxon>Euarchontoglires</taxon>
        <taxon>Glires</taxon>
        <taxon>Rodentia</taxon>
        <taxon>Myomorpha</taxon>
        <taxon>Muroidea</taxon>
        <taxon>Muridae</taxon>
        <taxon>Murinae</taxon>
        <taxon>Mus</taxon>
        <taxon>Mus</taxon>
    </lineage>
</organism>
<feature type="chain" id="PRO_0000190810" description="Heparan-sulfate 6-O-sulfotransferase 3">
    <location>
        <begin position="1"/>
        <end position="470"/>
    </location>
</feature>
<feature type="topological domain" description="Cytoplasmic" evidence="2">
    <location>
        <begin position="1"/>
        <end position="4"/>
    </location>
</feature>
<feature type="transmembrane region" description="Helical; Signal-anchor for type II membrane protein" evidence="2">
    <location>
        <begin position="5"/>
        <end position="27"/>
    </location>
</feature>
<feature type="topological domain" description="Lumenal" evidence="2">
    <location>
        <begin position="28"/>
        <end position="470"/>
    </location>
</feature>
<feature type="region of interest" description="Disordered" evidence="3">
    <location>
        <begin position="36"/>
        <end position="121"/>
    </location>
</feature>
<feature type="region of interest" description="Disordered" evidence="3">
    <location>
        <begin position="421"/>
        <end position="453"/>
    </location>
</feature>
<feature type="compositionally biased region" description="Acidic residues" evidence="3">
    <location>
        <begin position="88"/>
        <end position="113"/>
    </location>
</feature>
<feature type="compositionally biased region" description="Basic and acidic residues" evidence="3">
    <location>
        <begin position="422"/>
        <end position="439"/>
    </location>
</feature>
<feature type="active site" description="Proton acceptor" evidence="1">
    <location>
        <position position="208"/>
    </location>
</feature>
<feature type="binding site" evidence="1">
    <location>
        <begin position="151"/>
        <end position="159"/>
    </location>
    <ligand>
        <name>3'-phosphoadenylyl sulfate</name>
        <dbReference type="ChEBI" id="CHEBI:58339"/>
    </ligand>
</feature>
<feature type="binding site" evidence="1">
    <location>
        <begin position="181"/>
        <end position="182"/>
    </location>
    <ligand>
        <name>substrate</name>
    </ligand>
</feature>
<feature type="binding site" evidence="1">
    <location>
        <position position="198"/>
    </location>
    <ligand>
        <name>substrate</name>
    </ligand>
</feature>
<feature type="binding site" evidence="1">
    <location>
        <position position="203"/>
    </location>
    <ligand>
        <name>substrate</name>
    </ligand>
</feature>
<feature type="binding site" evidence="1">
    <location>
        <position position="208"/>
    </location>
    <ligand>
        <name>substrate</name>
    </ligand>
</feature>
<feature type="binding site" evidence="1">
    <location>
        <position position="244"/>
    </location>
    <ligand>
        <name>3'-phosphoadenylyl sulfate</name>
        <dbReference type="ChEBI" id="CHEBI:58339"/>
    </ligand>
</feature>
<feature type="binding site" evidence="1">
    <location>
        <position position="252"/>
    </location>
    <ligand>
        <name>3'-phosphoadenylyl sulfate</name>
        <dbReference type="ChEBI" id="CHEBI:58339"/>
    </ligand>
</feature>
<feature type="binding site" evidence="1">
    <location>
        <position position="256"/>
    </location>
    <ligand>
        <name>substrate</name>
    </ligand>
</feature>
<feature type="binding site" evidence="1">
    <location>
        <position position="263"/>
    </location>
    <ligand>
        <name>substrate</name>
    </ligand>
</feature>
<feature type="binding site" evidence="1">
    <location>
        <begin position="376"/>
        <end position="378"/>
    </location>
    <ligand>
        <name>3'-phosphoadenylyl sulfate</name>
        <dbReference type="ChEBI" id="CHEBI:58339"/>
    </ligand>
</feature>
<feature type="binding site" evidence="1">
    <location>
        <begin position="382"/>
        <end position="383"/>
    </location>
    <ligand>
        <name>3'-phosphoadenylyl sulfate</name>
        <dbReference type="ChEBI" id="CHEBI:58339"/>
    </ligand>
</feature>
<feature type="glycosylation site" description="N-linked (GlcNAc...) asparagine" evidence="2">
    <location>
        <position position="116"/>
    </location>
</feature>
<feature type="glycosylation site" description="N-linked (GlcNAc...) asparagine" evidence="2">
    <location>
        <position position="127"/>
    </location>
</feature>
<feature type="glycosylation site" description="N-linked (GlcNAc...) asparagine" evidence="2">
    <location>
        <position position="230"/>
    </location>
</feature>
<feature type="glycosylation site" description="N-linked (GlcNAc...) asparagine" evidence="2">
    <location>
        <position position="323"/>
    </location>
</feature>
<feature type="glycosylation site" description="N-linked (GlcNAc...) asparagine" evidence="2">
    <location>
        <position position="328"/>
    </location>
</feature>
<feature type="glycosylation site" description="N-linked (GlcNAc...) asparagine" evidence="2">
    <location>
        <position position="379"/>
    </location>
</feature>
<feature type="sequence conflict" description="In Ref. 1; BAA89249." evidence="5" ref="1">
    <original>L</original>
    <variation>F</variation>
    <location>
        <position position="16"/>
    </location>
</feature>
<protein>
    <recommendedName>
        <fullName>Heparan-sulfate 6-O-sulfotransferase 3</fullName>
        <shortName>HS6ST-3</shortName>
        <shortName>mHS6ST-3</shortName>
        <ecNumber>2.8.2.-</ecNumber>
    </recommendedName>
</protein>
<reference key="1">
    <citation type="journal article" date="2000" name="J. Biol. Chem.">
        <title>The occurrence of three isoforms of heparan sulfate 6-O-sulfotransferase having different specificities for hexuronic acid adjacent to the targeted N-sulfoglucosamine.</title>
        <authorList>
            <person name="Habuchi H."/>
            <person name="Tanaka M."/>
            <person name="Habuchi O."/>
            <person name="Yoshida K."/>
            <person name="Suzuki H."/>
            <person name="Ban K."/>
            <person name="Kimata K."/>
        </authorList>
    </citation>
    <scope>NUCLEOTIDE SEQUENCE [MRNA]</scope>
    <scope>BIOPHYSICOCHEMICAL PROPERTIES</scope>
    <scope>TISSUE SPECIFICITY</scope>
    <source>
        <tissue>Brain</tissue>
    </source>
</reference>
<reference key="2">
    <citation type="journal article" date="2004" name="Genome Res.">
        <title>The status, quality, and expansion of the NIH full-length cDNA project: the Mammalian Gene Collection (MGC).</title>
        <authorList>
            <consortium name="The MGC Project Team"/>
        </authorList>
    </citation>
    <scope>NUCLEOTIDE SEQUENCE [LARGE SCALE MRNA]</scope>
</reference>
<comment type="function">
    <text>6-O-sulfation enzyme which catalyzes the transfer of sulfate from 3'-phosphoadenosine 5'-phosphosulfate (PAPS) to position 6 of the N-sulfoglucosamine residue (GlcNS) of heparan sulfate.</text>
</comment>
<comment type="catalytic activity">
    <reaction>
        <text>alpha-D-glucosaminyl-[heparan sulfate](n) + 3'-phosphoadenylyl sulfate = 6-sulfo-alpha-D-glucosaminyl-[heparan sulfate](n) + adenosine 3',5'-bisphosphate + H(+)</text>
        <dbReference type="Rhea" id="RHEA:56604"/>
        <dbReference type="Rhea" id="RHEA-COMP:9830"/>
        <dbReference type="Rhea" id="RHEA-COMP:14621"/>
        <dbReference type="ChEBI" id="CHEBI:15378"/>
        <dbReference type="ChEBI" id="CHEBI:58339"/>
        <dbReference type="ChEBI" id="CHEBI:58343"/>
        <dbReference type="ChEBI" id="CHEBI:58388"/>
        <dbReference type="ChEBI" id="CHEBI:140604"/>
    </reaction>
</comment>
<comment type="biophysicochemical properties">
    <kinetics>
        <KM evidence="4">20 uM for CDSNS-heparin</KM>
        <KM evidence="4">20 uM for NS-heparosan</KM>
    </kinetics>
</comment>
<comment type="subcellular location">
    <subcellularLocation>
        <location evidence="5">Membrane</location>
        <topology evidence="5">Single-pass type II membrane protein</topology>
    </subcellularLocation>
</comment>
<comment type="tissue specificity">
    <text evidence="4">Ubiquitously expressed.</text>
</comment>
<comment type="similarity">
    <text evidence="5">Belongs to the sulfotransferase 6 family.</text>
</comment>